<reference key="1">
    <citation type="journal article" date="1990" name="J. Gen. Virol.">
        <title>Nucleotide sequence analysis of a 10.5 kbp HindIII fragment of fowlpox virus: relatedness to the central portion of the vaccinia virus HindIII D region.</title>
        <authorList>
            <person name="Tartaglia J."/>
            <person name="Winslow J."/>
            <person name="Goebel S.J."/>
            <person name="Johnson G.P."/>
            <person name="Taylor J."/>
            <person name="Paoletti E."/>
        </authorList>
    </citation>
    <scope>NUCLEOTIDE SEQUENCE [GENOMIC DNA]</scope>
    <source>
        <strain>FP-1</strain>
    </source>
</reference>
<reference key="2">
    <citation type="journal article" date="2000" name="J. Virol.">
        <title>The genome of fowlpox virus.</title>
        <authorList>
            <person name="Afonso C.L."/>
            <person name="Tulman E.R."/>
            <person name="Lu Z."/>
            <person name="Zsak L."/>
            <person name="Kutish G.F."/>
            <person name="Rock D.L."/>
        </authorList>
    </citation>
    <scope>NUCLEOTIDE SEQUENCE [LARGE SCALE GENOMIC DNA]</scope>
</reference>
<protein>
    <recommendedName>
        <fullName>Putative CC-type chemokine FPV060</fullName>
    </recommendedName>
</protein>
<feature type="chain" id="PRO_0000144305" description="Putative CC-type chemokine FPV060">
    <location>
        <begin position="1"/>
        <end position="188"/>
    </location>
</feature>
<gene>
    <name type="ordered locus">FPV060</name>
    <name type="ORF">FP18</name>
</gene>
<comment type="similarity">
    <text evidence="1">Belongs to the intercrine beta (chemokine CC) family. Highly divergent.</text>
</comment>
<comment type="sequence caution" evidence="1">
    <conflict type="frameshift">
        <sequence resource="EMBL-CDS" id="CAA35066"/>
    </conflict>
</comment>
<dbReference type="EMBL" id="X17202">
    <property type="protein sequence ID" value="CAA35066.1"/>
    <property type="status" value="ALT_FRAME"/>
    <property type="molecule type" value="Genomic_DNA"/>
</dbReference>
<dbReference type="EMBL" id="AF198100">
    <property type="protein sequence ID" value="AAF44404.1"/>
    <property type="molecule type" value="Genomic_DNA"/>
</dbReference>
<dbReference type="PIR" id="C35216">
    <property type="entry name" value="C35216"/>
</dbReference>
<dbReference type="RefSeq" id="NP_039023.1">
    <property type="nucleotide sequence ID" value="NC_002188.1"/>
</dbReference>
<dbReference type="GeneID" id="1486608"/>
<dbReference type="KEGG" id="vg:1486608"/>
<dbReference type="Proteomes" id="UP000008597">
    <property type="component" value="Segment"/>
</dbReference>
<dbReference type="GO" id="GO:0005615">
    <property type="term" value="C:extracellular space"/>
    <property type="evidence" value="ECO:0007669"/>
    <property type="project" value="UniProtKB-KW"/>
</dbReference>
<dbReference type="GO" id="GO:0005125">
    <property type="term" value="F:cytokine activity"/>
    <property type="evidence" value="ECO:0007669"/>
    <property type="project" value="UniProtKB-KW"/>
</dbReference>
<dbReference type="InterPro" id="IPR020343">
    <property type="entry name" value="Chemokine_CC_FPV060"/>
</dbReference>
<dbReference type="Pfam" id="PF17614">
    <property type="entry name" value="FPV060"/>
    <property type="match status" value="1"/>
</dbReference>
<organism>
    <name type="scientific">Fowlpox virus (strain NVSL)</name>
    <name type="common">FPV</name>
    <dbReference type="NCBI Taxonomy" id="928301"/>
    <lineage>
        <taxon>Viruses</taxon>
        <taxon>Varidnaviria</taxon>
        <taxon>Bamfordvirae</taxon>
        <taxon>Nucleocytoviricota</taxon>
        <taxon>Pokkesviricetes</taxon>
        <taxon>Chitovirales</taxon>
        <taxon>Poxviridae</taxon>
        <taxon>Chordopoxvirinae</taxon>
        <taxon>Avipoxvirus</taxon>
        <taxon>Fowlpox virus</taxon>
    </lineage>
</organism>
<name>V060_FOWPN</name>
<accession>P21973</accession>
<accession>Q9J5F0</accession>
<organismHost>
    <name type="scientific">Vertebrata</name>
    <dbReference type="NCBI Taxonomy" id="7742"/>
</organismHost>
<keyword id="KW-0202">Cytokine</keyword>
<keyword id="KW-1185">Reference proteome</keyword>
<sequence length="188" mass="20920">MYTRYKLSILFFVINFYNILCMPLSCETECCMAGKKYDDAAIDRDLCVLLCNLQYLASSNEGIGEILQCCLSSNYTSKTREDLRNCIAKCPPLPDRGCTGECCDLRENVDSLRANNPLGCCNDYTKVSSSSLNEDDVIDCRKSDASCEDRGYLLVRNNGSAVCIPENSKNDNIGFYFGSECSDLSRKG</sequence>
<proteinExistence type="inferred from homology"/>
<evidence type="ECO:0000305" key="1"/>